<comment type="function">
    <text evidence="3">Part of the ABC transporter complex ArtPIQMJ involved in arginine transport. Probably responsible for the translocation of the substrate across the membrane.</text>
</comment>
<comment type="subunit">
    <text evidence="5">The complex is composed of two ATP-binding proteins (ArtP), two transmembrane proteins (ArtM and ArtQ) and two solute-binding proteins (ArtJ and ArtI).</text>
</comment>
<comment type="subcellular location">
    <subcellularLocation>
        <location>Cell inner membrane</location>
        <topology>Multi-pass membrane protein</topology>
    </subcellularLocation>
</comment>
<comment type="similarity">
    <text evidence="4">Belongs to the binding-protein-dependent transport system permease family. HisMQ subfamily.</text>
</comment>
<evidence type="ECO:0000255" key="1"/>
<evidence type="ECO:0000255" key="2">
    <source>
        <dbReference type="PROSITE-ProRule" id="PRU00441"/>
    </source>
</evidence>
<evidence type="ECO:0000269" key="3">
    <source>
    </source>
</evidence>
<evidence type="ECO:0000305" key="4"/>
<evidence type="ECO:0000305" key="5">
    <source>
    </source>
</evidence>
<keyword id="KW-0029">Amino-acid transport</keyword>
<keyword id="KW-0997">Cell inner membrane</keyword>
<keyword id="KW-1003">Cell membrane</keyword>
<keyword id="KW-0472">Membrane</keyword>
<keyword id="KW-1185">Reference proteome</keyword>
<keyword id="KW-0812">Transmembrane</keyword>
<keyword id="KW-1133">Transmembrane helix</keyword>
<keyword id="KW-0813">Transport</keyword>
<protein>
    <recommendedName>
        <fullName>Arginine ABC transporter permease protein ArtQ</fullName>
    </recommendedName>
</protein>
<gene>
    <name type="primary">artQ</name>
    <name type="ordered locus">b0862</name>
    <name type="ordered locus">JW0846</name>
</gene>
<accession>P0AE34</accession>
<accession>P30861</accession>
<accession>P77290</accession>
<reference key="1">
    <citation type="journal article" date="1993" name="J. Bacteriol.">
        <title>Physical map location of the new artPIQMJ genes of Escherichia coli, encoding a periplasmic arginine transport system.</title>
        <authorList>
            <person name="Wissenbach U."/>
            <person name="Unden G."/>
        </authorList>
    </citation>
    <scope>NUCLEOTIDE SEQUENCE [GENOMIC DNA]</scope>
    <source>
        <strain>K12 / AN387</strain>
    </source>
</reference>
<reference key="2">
    <citation type="journal article" date="1996" name="DNA Res.">
        <title>A 718-kb DNA sequence of the Escherichia coli K-12 genome corresponding to the 12.7-28.0 min region on the linkage map.</title>
        <authorList>
            <person name="Oshima T."/>
            <person name="Aiba H."/>
            <person name="Baba T."/>
            <person name="Fujita K."/>
            <person name="Hayashi K."/>
            <person name="Honjo A."/>
            <person name="Ikemoto K."/>
            <person name="Inada T."/>
            <person name="Itoh T."/>
            <person name="Kajihara M."/>
            <person name="Kanai K."/>
            <person name="Kashimoto K."/>
            <person name="Kimura S."/>
            <person name="Kitagawa M."/>
            <person name="Makino K."/>
            <person name="Masuda S."/>
            <person name="Miki T."/>
            <person name="Mizobuchi K."/>
            <person name="Mori H."/>
            <person name="Motomura K."/>
            <person name="Nakamura Y."/>
            <person name="Nashimoto H."/>
            <person name="Nishio Y."/>
            <person name="Saito N."/>
            <person name="Sampei G."/>
            <person name="Seki Y."/>
            <person name="Tagami H."/>
            <person name="Takemoto K."/>
            <person name="Wada C."/>
            <person name="Yamamoto Y."/>
            <person name="Yano M."/>
            <person name="Horiuchi T."/>
        </authorList>
    </citation>
    <scope>NUCLEOTIDE SEQUENCE [LARGE SCALE GENOMIC DNA]</scope>
    <source>
        <strain>K12 / W3110 / ATCC 27325 / DSM 5911</strain>
    </source>
</reference>
<reference key="3">
    <citation type="journal article" date="1997" name="Science">
        <title>The complete genome sequence of Escherichia coli K-12.</title>
        <authorList>
            <person name="Blattner F.R."/>
            <person name="Plunkett G. III"/>
            <person name="Bloch C.A."/>
            <person name="Perna N.T."/>
            <person name="Burland V."/>
            <person name="Riley M."/>
            <person name="Collado-Vides J."/>
            <person name="Glasner J.D."/>
            <person name="Rode C.K."/>
            <person name="Mayhew G.F."/>
            <person name="Gregor J."/>
            <person name="Davis N.W."/>
            <person name="Kirkpatrick H.A."/>
            <person name="Goeden M.A."/>
            <person name="Rose D.J."/>
            <person name="Mau B."/>
            <person name="Shao Y."/>
        </authorList>
    </citation>
    <scope>NUCLEOTIDE SEQUENCE [LARGE SCALE GENOMIC DNA]</scope>
    <source>
        <strain>K12 / MG1655 / ATCC 47076</strain>
    </source>
</reference>
<reference key="4">
    <citation type="journal article" date="2006" name="Mol. Syst. Biol.">
        <title>Highly accurate genome sequences of Escherichia coli K-12 strains MG1655 and W3110.</title>
        <authorList>
            <person name="Hayashi K."/>
            <person name="Morooka N."/>
            <person name="Yamamoto Y."/>
            <person name="Fujita K."/>
            <person name="Isono K."/>
            <person name="Choi S."/>
            <person name="Ohtsubo E."/>
            <person name="Baba T."/>
            <person name="Wanner B.L."/>
            <person name="Mori H."/>
            <person name="Horiuchi T."/>
        </authorList>
    </citation>
    <scope>NUCLEOTIDE SEQUENCE [LARGE SCALE GENOMIC DNA]</scope>
    <source>
        <strain>K12 / W3110 / ATCC 27325 / DSM 5911</strain>
    </source>
</reference>
<reference key="5">
    <citation type="journal article" date="1995" name="Mol. Microbiol.">
        <title>A third periplasmic transport system for L-arginine in Escherichia coli: molecular characterization of the artPIQMJ genes, arginine binding and transport.</title>
        <authorList>
            <person name="Wissenbach U."/>
            <person name="Six S."/>
            <person name="Bongaerts J."/>
            <person name="Ternes D."/>
            <person name="Steinwachs S."/>
            <person name="Unden G."/>
        </authorList>
    </citation>
    <scope>FUNCTION</scope>
    <scope>SUBUNIT</scope>
</reference>
<reference key="6">
    <citation type="journal article" date="2005" name="Science">
        <title>Global topology analysis of the Escherichia coli inner membrane proteome.</title>
        <authorList>
            <person name="Daley D.O."/>
            <person name="Rapp M."/>
            <person name="Granseth E."/>
            <person name="Melen K."/>
            <person name="Drew D."/>
            <person name="von Heijne G."/>
        </authorList>
    </citation>
    <scope>TOPOLOGY [LARGE SCALE ANALYSIS]</scope>
    <source>
        <strain>K12 / MG1655 / ATCC 47076</strain>
    </source>
</reference>
<sequence>MNEFFPLASAAGMTVGLAVCALIVGLALAMFFAVWESAKWRPVAWAGSALVTILRGLPEILVVLFIYFGSSQLLLTLSDGFTINLGFVQIPVQMDIENFDVSPFLCGVIALSLLYAAYASQTLRGALKAVPVGQWESGQALGLSKSAIFFRLVMPQMWRHALPGLGNQWLVLLKDTALVSLISVNDLMLQTKSIATRTQEPFTWYIVAAAIYLVITLLSQYILKRIDLRATRFERRPS</sequence>
<proteinExistence type="evidence at protein level"/>
<dbReference type="EMBL" id="X86160">
    <property type="protein sequence ID" value="CAA60103.1"/>
    <property type="molecule type" value="Genomic_DNA"/>
</dbReference>
<dbReference type="EMBL" id="U00096">
    <property type="protein sequence ID" value="AAC73949.1"/>
    <property type="molecule type" value="Genomic_DNA"/>
</dbReference>
<dbReference type="EMBL" id="AP009048">
    <property type="protein sequence ID" value="BAA35576.1"/>
    <property type="molecule type" value="Genomic_DNA"/>
</dbReference>
<dbReference type="PIR" id="F64824">
    <property type="entry name" value="F64824"/>
</dbReference>
<dbReference type="RefSeq" id="NP_415383.1">
    <property type="nucleotide sequence ID" value="NC_000913.3"/>
</dbReference>
<dbReference type="RefSeq" id="WP_001001691.1">
    <property type="nucleotide sequence ID" value="NZ_SSZK01000002.1"/>
</dbReference>
<dbReference type="SMR" id="P0AE34"/>
<dbReference type="BioGRID" id="4259997">
    <property type="interactions" value="11"/>
</dbReference>
<dbReference type="ComplexPortal" id="CPX-4318">
    <property type="entry name" value="Arginine ABC transporter complex, artI variant"/>
</dbReference>
<dbReference type="ComplexPortal" id="CPX-4319">
    <property type="entry name" value="Arginine ABC transporter complex, artJ variant"/>
</dbReference>
<dbReference type="DIP" id="DIP-48128N"/>
<dbReference type="FunCoup" id="P0AE34">
    <property type="interactions" value="207"/>
</dbReference>
<dbReference type="IntAct" id="P0AE34">
    <property type="interactions" value="2"/>
</dbReference>
<dbReference type="STRING" id="511145.b0862"/>
<dbReference type="TCDB" id="3.A.1.3.3">
    <property type="family name" value="the atp-binding cassette (abc) superfamily"/>
</dbReference>
<dbReference type="jPOST" id="P0AE34"/>
<dbReference type="PaxDb" id="511145-b0862"/>
<dbReference type="EnsemblBacteria" id="AAC73949">
    <property type="protein sequence ID" value="AAC73949"/>
    <property type="gene ID" value="b0862"/>
</dbReference>
<dbReference type="GeneID" id="93776560"/>
<dbReference type="GeneID" id="949046"/>
<dbReference type="KEGG" id="ecj:JW0846"/>
<dbReference type="KEGG" id="eco:b0862"/>
<dbReference type="KEGG" id="ecoc:C3026_05370"/>
<dbReference type="PATRIC" id="fig|1411691.4.peg.1415"/>
<dbReference type="EchoBASE" id="EB1583"/>
<dbReference type="eggNOG" id="COG4215">
    <property type="taxonomic scope" value="Bacteria"/>
</dbReference>
<dbReference type="HOGENOM" id="CLU_019602_1_4_6"/>
<dbReference type="InParanoid" id="P0AE34"/>
<dbReference type="OMA" id="PVFFPLR"/>
<dbReference type="OrthoDB" id="9815029at2"/>
<dbReference type="PhylomeDB" id="P0AE34"/>
<dbReference type="BioCyc" id="EcoCyc:ARTQ-MONOMER"/>
<dbReference type="BioCyc" id="MetaCyc:ARTQ-MONOMER"/>
<dbReference type="PRO" id="PR:P0AE34"/>
<dbReference type="Proteomes" id="UP000000625">
    <property type="component" value="Chromosome"/>
</dbReference>
<dbReference type="GO" id="GO:0055052">
    <property type="term" value="C:ATP-binding cassette (ABC) transporter complex, substrate-binding subunit-containing"/>
    <property type="evidence" value="ECO:0000303"/>
    <property type="project" value="ComplexPortal"/>
</dbReference>
<dbReference type="GO" id="GO:0016020">
    <property type="term" value="C:membrane"/>
    <property type="evidence" value="ECO:0000303"/>
    <property type="project" value="ComplexPortal"/>
</dbReference>
<dbReference type="GO" id="GO:0005886">
    <property type="term" value="C:plasma membrane"/>
    <property type="evidence" value="ECO:0000314"/>
    <property type="project" value="EcoCyc"/>
</dbReference>
<dbReference type="GO" id="GO:0022857">
    <property type="term" value="F:transmembrane transporter activity"/>
    <property type="evidence" value="ECO:0007669"/>
    <property type="project" value="InterPro"/>
</dbReference>
<dbReference type="GO" id="GO:0097638">
    <property type="term" value="P:L-arginine import across plasma membrane"/>
    <property type="evidence" value="ECO:0000266"/>
    <property type="project" value="EcoCyc"/>
</dbReference>
<dbReference type="CDD" id="cd06261">
    <property type="entry name" value="TM_PBP2"/>
    <property type="match status" value="1"/>
</dbReference>
<dbReference type="FunFam" id="1.10.3720.10:FF:000027">
    <property type="entry name" value="Arginine ABC transporter, permease protein ArtQ"/>
    <property type="match status" value="1"/>
</dbReference>
<dbReference type="Gene3D" id="1.10.3720.10">
    <property type="entry name" value="MetI-like"/>
    <property type="match status" value="1"/>
</dbReference>
<dbReference type="InterPro" id="IPR010065">
    <property type="entry name" value="AA_ABC_transptr_permease_3TM"/>
</dbReference>
<dbReference type="InterPro" id="IPR051613">
    <property type="entry name" value="ABC_transp_permease_HisMQ"/>
</dbReference>
<dbReference type="InterPro" id="IPR000515">
    <property type="entry name" value="MetI-like"/>
</dbReference>
<dbReference type="InterPro" id="IPR035906">
    <property type="entry name" value="MetI-like_sf"/>
</dbReference>
<dbReference type="NCBIfam" id="TIGR01726">
    <property type="entry name" value="HEQRo_perm_3TM"/>
    <property type="match status" value="1"/>
</dbReference>
<dbReference type="NCBIfam" id="NF008337">
    <property type="entry name" value="PRK11123.1"/>
    <property type="match status" value="1"/>
</dbReference>
<dbReference type="PANTHER" id="PTHR30133:SF2">
    <property type="entry name" value="ARGININE ABC TRANSPORTER PERMEASE PROTEIN ARTQ"/>
    <property type="match status" value="1"/>
</dbReference>
<dbReference type="PANTHER" id="PTHR30133">
    <property type="entry name" value="CATIONIC AMINO ACID TRANSPORTER, MEMBRANE COMPONENT"/>
    <property type="match status" value="1"/>
</dbReference>
<dbReference type="Pfam" id="PF00528">
    <property type="entry name" value="BPD_transp_1"/>
    <property type="match status" value="1"/>
</dbReference>
<dbReference type="SUPFAM" id="SSF161098">
    <property type="entry name" value="MetI-like"/>
    <property type="match status" value="1"/>
</dbReference>
<dbReference type="PROSITE" id="PS50928">
    <property type="entry name" value="ABC_TM1"/>
    <property type="match status" value="1"/>
</dbReference>
<organism>
    <name type="scientific">Escherichia coli (strain K12)</name>
    <dbReference type="NCBI Taxonomy" id="83333"/>
    <lineage>
        <taxon>Bacteria</taxon>
        <taxon>Pseudomonadati</taxon>
        <taxon>Pseudomonadota</taxon>
        <taxon>Gammaproteobacteria</taxon>
        <taxon>Enterobacterales</taxon>
        <taxon>Enterobacteriaceae</taxon>
        <taxon>Escherichia</taxon>
    </lineage>
</organism>
<feature type="chain" id="PRO_0000059961" description="Arginine ABC transporter permease protein ArtQ">
    <location>
        <begin position="1"/>
        <end position="238"/>
    </location>
</feature>
<feature type="topological domain" description="Periplasmic" evidence="1">
    <location>
        <begin position="1"/>
        <end position="14"/>
    </location>
</feature>
<feature type="transmembrane region" description="Helical" evidence="2">
    <location>
        <begin position="15"/>
        <end position="35"/>
    </location>
</feature>
<feature type="topological domain" description="Cytoplasmic" evidence="1">
    <location>
        <begin position="36"/>
        <end position="48"/>
    </location>
</feature>
<feature type="transmembrane region" description="Helical" evidence="2">
    <location>
        <begin position="49"/>
        <end position="69"/>
    </location>
</feature>
<feature type="topological domain" description="Periplasmic" evidence="1">
    <location>
        <begin position="70"/>
        <end position="98"/>
    </location>
</feature>
<feature type="transmembrane region" description="Helical" evidence="2">
    <location>
        <begin position="99"/>
        <end position="119"/>
    </location>
</feature>
<feature type="topological domain" description="Cytoplasmic" evidence="1">
    <location>
        <begin position="120"/>
        <end position="168"/>
    </location>
</feature>
<feature type="transmembrane region" description="Helical" evidence="2">
    <location>
        <begin position="169"/>
        <end position="189"/>
    </location>
</feature>
<feature type="topological domain" description="Periplasmic" evidence="1">
    <location>
        <begin position="190"/>
        <end position="201"/>
    </location>
</feature>
<feature type="transmembrane region" description="Helical" evidence="2">
    <location>
        <begin position="202"/>
        <end position="222"/>
    </location>
</feature>
<feature type="topological domain" description="Cytoplasmic" evidence="1">
    <location>
        <begin position="223"/>
        <end position="238"/>
    </location>
</feature>
<feature type="domain" description="ABC transmembrane type-1" evidence="2">
    <location>
        <begin position="11"/>
        <end position="223"/>
    </location>
</feature>
<feature type="sequence conflict" description="In Ref. 1; CAA60103." evidence="4" ref="1">
    <original>QMW</original>
    <variation>ADV</variation>
    <location>
        <begin position="156"/>
        <end position="158"/>
    </location>
</feature>
<name>ARTQ_ECOLI</name>